<name>GUAD_SCHPO</name>
<evidence type="ECO:0000250" key="1"/>
<evidence type="ECO:0000250" key="2">
    <source>
        <dbReference type="UniProtKB" id="Q9Y2T3"/>
    </source>
</evidence>
<evidence type="ECO:0000305" key="3"/>
<proteinExistence type="inferred from homology"/>
<accession>O14057</accession>
<dbReference type="EC" id="3.5.4.3"/>
<dbReference type="EMBL" id="CU329672">
    <property type="protein sequence ID" value="CAA20441.1"/>
    <property type="molecule type" value="Genomic_DNA"/>
</dbReference>
<dbReference type="PIR" id="T41047">
    <property type="entry name" value="T41047"/>
</dbReference>
<dbReference type="SMR" id="O14057"/>
<dbReference type="BioGRID" id="275801">
    <property type="interactions" value="5"/>
</dbReference>
<dbReference type="FunCoup" id="O14057">
    <property type="interactions" value="401"/>
</dbReference>
<dbReference type="STRING" id="284812.O14057"/>
<dbReference type="iPTMnet" id="O14057"/>
<dbReference type="PaxDb" id="4896-SPCC1672.03c.1"/>
<dbReference type="EnsemblFungi" id="SPCC1672.03c.1">
    <property type="protein sequence ID" value="SPCC1672.03c.1:pep"/>
    <property type="gene ID" value="SPCC1672.03c"/>
</dbReference>
<dbReference type="KEGG" id="spo:2539231"/>
<dbReference type="PomBase" id="SPCC1672.03c"/>
<dbReference type="VEuPathDB" id="FungiDB:SPCC1672.03c"/>
<dbReference type="eggNOG" id="KOG3968">
    <property type="taxonomic scope" value="Eukaryota"/>
</dbReference>
<dbReference type="HOGENOM" id="CLU_012358_0_1_1"/>
<dbReference type="InParanoid" id="O14057"/>
<dbReference type="OMA" id="IIASWGK"/>
<dbReference type="PhylomeDB" id="O14057"/>
<dbReference type="Reactome" id="R-SPO-74259">
    <property type="pathway name" value="Purine catabolism"/>
</dbReference>
<dbReference type="UniPathway" id="UPA00603">
    <property type="reaction ID" value="UER00660"/>
</dbReference>
<dbReference type="PRO" id="PR:O14057"/>
<dbReference type="Proteomes" id="UP000002485">
    <property type="component" value="Chromosome III"/>
</dbReference>
<dbReference type="GO" id="GO:0005829">
    <property type="term" value="C:cytosol"/>
    <property type="evidence" value="ECO:0007005"/>
    <property type="project" value="PomBase"/>
</dbReference>
<dbReference type="GO" id="GO:0008892">
    <property type="term" value="F:guanine deaminase activity"/>
    <property type="evidence" value="ECO:0000318"/>
    <property type="project" value="GO_Central"/>
</dbReference>
<dbReference type="GO" id="GO:0008270">
    <property type="term" value="F:zinc ion binding"/>
    <property type="evidence" value="ECO:0000318"/>
    <property type="project" value="GO_Central"/>
</dbReference>
<dbReference type="GO" id="GO:0006147">
    <property type="term" value="P:guanine catabolic process"/>
    <property type="evidence" value="ECO:0007669"/>
    <property type="project" value="UniProtKB-UniPathway"/>
</dbReference>
<dbReference type="GO" id="GO:0046098">
    <property type="term" value="P:guanine metabolic process"/>
    <property type="evidence" value="ECO:0000318"/>
    <property type="project" value="GO_Central"/>
</dbReference>
<dbReference type="CDD" id="cd01303">
    <property type="entry name" value="GDEase"/>
    <property type="match status" value="1"/>
</dbReference>
<dbReference type="FunFam" id="3.20.20.140:FF:000022">
    <property type="entry name" value="Guanine deaminase"/>
    <property type="match status" value="1"/>
</dbReference>
<dbReference type="Gene3D" id="3.20.20.140">
    <property type="entry name" value="Metal-dependent hydrolases"/>
    <property type="match status" value="1"/>
</dbReference>
<dbReference type="Gene3D" id="2.30.40.10">
    <property type="entry name" value="Urease, subunit C, domain 1"/>
    <property type="match status" value="1"/>
</dbReference>
<dbReference type="InterPro" id="IPR006680">
    <property type="entry name" value="Amidohydro-rel"/>
</dbReference>
<dbReference type="InterPro" id="IPR014311">
    <property type="entry name" value="Guanine_deaminase"/>
</dbReference>
<dbReference type="InterPro" id="IPR011059">
    <property type="entry name" value="Metal-dep_hydrolase_composite"/>
</dbReference>
<dbReference type="InterPro" id="IPR032466">
    <property type="entry name" value="Metal_Hydrolase"/>
</dbReference>
<dbReference type="InterPro" id="IPR051607">
    <property type="entry name" value="Metallo-dep_hydrolases"/>
</dbReference>
<dbReference type="NCBIfam" id="TIGR02967">
    <property type="entry name" value="guan_deamin"/>
    <property type="match status" value="1"/>
</dbReference>
<dbReference type="PANTHER" id="PTHR11271">
    <property type="entry name" value="GUANINE DEAMINASE"/>
    <property type="match status" value="1"/>
</dbReference>
<dbReference type="PANTHER" id="PTHR11271:SF6">
    <property type="entry name" value="GUANINE DEAMINASE"/>
    <property type="match status" value="1"/>
</dbReference>
<dbReference type="Pfam" id="PF01979">
    <property type="entry name" value="Amidohydro_1"/>
    <property type="match status" value="1"/>
</dbReference>
<dbReference type="SUPFAM" id="SSF51338">
    <property type="entry name" value="Composite domain of metallo-dependent hydrolases"/>
    <property type="match status" value="1"/>
</dbReference>
<dbReference type="SUPFAM" id="SSF51556">
    <property type="entry name" value="Metallo-dependent hydrolases"/>
    <property type="match status" value="1"/>
</dbReference>
<gene>
    <name type="ORF">SPCC1672.03c</name>
</gene>
<comment type="function">
    <text evidence="1">Catalyzes the hydrolytic deamination of guanine, producing xanthine and ammonia.</text>
</comment>
<comment type="catalytic activity">
    <reaction>
        <text>guanine + H2O + H(+) = xanthine + NH4(+)</text>
        <dbReference type="Rhea" id="RHEA:14665"/>
        <dbReference type="ChEBI" id="CHEBI:15377"/>
        <dbReference type="ChEBI" id="CHEBI:15378"/>
        <dbReference type="ChEBI" id="CHEBI:16235"/>
        <dbReference type="ChEBI" id="CHEBI:17712"/>
        <dbReference type="ChEBI" id="CHEBI:28938"/>
        <dbReference type="EC" id="3.5.4.3"/>
    </reaction>
</comment>
<comment type="cofactor">
    <cofactor evidence="1">
        <name>Zn(2+)</name>
        <dbReference type="ChEBI" id="CHEBI:29105"/>
    </cofactor>
    <text evidence="1">Binds 1 zinc ion per subunit.</text>
</comment>
<comment type="pathway">
    <text>Purine metabolism; guanine degradation; xanthine from guanine: step 1/1.</text>
</comment>
<comment type="similarity">
    <text evidence="3">Belongs to the metallo-dependent hydrolases superfamily. ATZ/TRZ family.</text>
</comment>
<reference key="1">
    <citation type="journal article" date="2002" name="Nature">
        <title>The genome sequence of Schizosaccharomyces pombe.</title>
        <authorList>
            <person name="Wood V."/>
            <person name="Gwilliam R."/>
            <person name="Rajandream M.A."/>
            <person name="Lyne M.H."/>
            <person name="Lyne R."/>
            <person name="Stewart A."/>
            <person name="Sgouros J.G."/>
            <person name="Peat N."/>
            <person name="Hayles J."/>
            <person name="Baker S.G."/>
            <person name="Basham D."/>
            <person name="Bowman S."/>
            <person name="Brooks K."/>
            <person name="Brown D."/>
            <person name="Brown S."/>
            <person name="Chillingworth T."/>
            <person name="Churcher C.M."/>
            <person name="Collins M."/>
            <person name="Connor R."/>
            <person name="Cronin A."/>
            <person name="Davis P."/>
            <person name="Feltwell T."/>
            <person name="Fraser A."/>
            <person name="Gentles S."/>
            <person name="Goble A."/>
            <person name="Hamlin N."/>
            <person name="Harris D.E."/>
            <person name="Hidalgo J."/>
            <person name="Hodgson G."/>
            <person name="Holroyd S."/>
            <person name="Hornsby T."/>
            <person name="Howarth S."/>
            <person name="Huckle E.J."/>
            <person name="Hunt S."/>
            <person name="Jagels K."/>
            <person name="James K.D."/>
            <person name="Jones L."/>
            <person name="Jones M."/>
            <person name="Leather S."/>
            <person name="McDonald S."/>
            <person name="McLean J."/>
            <person name="Mooney P."/>
            <person name="Moule S."/>
            <person name="Mungall K.L."/>
            <person name="Murphy L.D."/>
            <person name="Niblett D."/>
            <person name="Odell C."/>
            <person name="Oliver K."/>
            <person name="O'Neil S."/>
            <person name="Pearson D."/>
            <person name="Quail M.A."/>
            <person name="Rabbinowitsch E."/>
            <person name="Rutherford K.M."/>
            <person name="Rutter S."/>
            <person name="Saunders D."/>
            <person name="Seeger K."/>
            <person name="Sharp S."/>
            <person name="Skelton J."/>
            <person name="Simmonds M.N."/>
            <person name="Squares R."/>
            <person name="Squares S."/>
            <person name="Stevens K."/>
            <person name="Taylor K."/>
            <person name="Taylor R.G."/>
            <person name="Tivey A."/>
            <person name="Walsh S.V."/>
            <person name="Warren T."/>
            <person name="Whitehead S."/>
            <person name="Woodward J.R."/>
            <person name="Volckaert G."/>
            <person name="Aert R."/>
            <person name="Robben J."/>
            <person name="Grymonprez B."/>
            <person name="Weltjens I."/>
            <person name="Vanstreels E."/>
            <person name="Rieger M."/>
            <person name="Schaefer M."/>
            <person name="Mueller-Auer S."/>
            <person name="Gabel C."/>
            <person name="Fuchs M."/>
            <person name="Duesterhoeft A."/>
            <person name="Fritzc C."/>
            <person name="Holzer E."/>
            <person name="Moestl D."/>
            <person name="Hilbert H."/>
            <person name="Borzym K."/>
            <person name="Langer I."/>
            <person name="Beck A."/>
            <person name="Lehrach H."/>
            <person name="Reinhardt R."/>
            <person name="Pohl T.M."/>
            <person name="Eger P."/>
            <person name="Zimmermann W."/>
            <person name="Wedler H."/>
            <person name="Wambutt R."/>
            <person name="Purnelle B."/>
            <person name="Goffeau A."/>
            <person name="Cadieu E."/>
            <person name="Dreano S."/>
            <person name="Gloux S."/>
            <person name="Lelaure V."/>
            <person name="Mottier S."/>
            <person name="Galibert F."/>
            <person name="Aves S.J."/>
            <person name="Xiang Z."/>
            <person name="Hunt C."/>
            <person name="Moore K."/>
            <person name="Hurst S.M."/>
            <person name="Lucas M."/>
            <person name="Rochet M."/>
            <person name="Gaillardin C."/>
            <person name="Tallada V.A."/>
            <person name="Garzon A."/>
            <person name="Thode G."/>
            <person name="Daga R.R."/>
            <person name="Cruzado L."/>
            <person name="Jimenez J."/>
            <person name="Sanchez M."/>
            <person name="del Rey F."/>
            <person name="Benito J."/>
            <person name="Dominguez A."/>
            <person name="Revuelta J.L."/>
            <person name="Moreno S."/>
            <person name="Armstrong J."/>
            <person name="Forsburg S.L."/>
            <person name="Cerutti L."/>
            <person name="Lowe T."/>
            <person name="McCombie W.R."/>
            <person name="Paulsen I."/>
            <person name="Potashkin J."/>
            <person name="Shpakovski G.V."/>
            <person name="Ussery D."/>
            <person name="Barrell B.G."/>
            <person name="Nurse P."/>
        </authorList>
    </citation>
    <scope>NUCLEOTIDE SEQUENCE [LARGE SCALE GENOMIC DNA]</scope>
    <source>
        <strain>972 / ATCC 24843</strain>
    </source>
</reference>
<sequence length="527" mass="58047">MDGHTCDVFVGKLIHTPSLGELEITDATVGVYNGKIVFLEKSMTPKTLEEAKSHHLLKEATIHKLKPLQFMFPGLIDTHIHAPQYPNSGIGIDVPLLQWLEKYTFPLESSLADLEEARQVYKRVVERTLSNGTTFASYFSTLHTPTSALLAEICYSYGQRAYIGKCNMNNLSPDHYCEKSAESSLEATRQLISYMSILDPKREMVTPIITPRFAPSCTEDLLSGCGELAEKHNLPIQTHISENTSEIELVKELFPERKSYADVYDYYKLLTPQTILAHAIHLEDEEIELLTKRSSGISHCPTSNSILASGLANVRKLLDSGINVGLGTDVSGGYAPSILIALRHAAMTSRSLSYVLGDPKVMLDLSELLYLATQGGAEVVSRGDQVGSFAVGKYWDALIVDLSAETHSCVDIFERDTWPVMLSKWVFTSDDRNLAQVWVNGRLVSGFEMKANLKNSTPLTNGVTSSGHQVFKELTQAHLLPRTQCVDTPPSCCGGHCCKEESCRTENCKGAYPANATVTVEEDSGMS</sequence>
<keyword id="KW-0378">Hydrolase</keyword>
<keyword id="KW-0479">Metal-binding</keyword>
<keyword id="KW-1185">Reference proteome</keyword>
<keyword id="KW-0862">Zinc</keyword>
<protein>
    <recommendedName>
        <fullName>Probable guanine deaminase</fullName>
        <shortName>Guanase</shortName>
        <shortName>Guanine aminase</shortName>
        <ecNumber>3.5.4.3</ecNumber>
    </recommendedName>
    <alternativeName>
        <fullName>Guanine aminohydrolase</fullName>
        <shortName>GAH</shortName>
    </alternativeName>
</protein>
<organism>
    <name type="scientific">Schizosaccharomyces pombe (strain 972 / ATCC 24843)</name>
    <name type="common">Fission yeast</name>
    <dbReference type="NCBI Taxonomy" id="284812"/>
    <lineage>
        <taxon>Eukaryota</taxon>
        <taxon>Fungi</taxon>
        <taxon>Dikarya</taxon>
        <taxon>Ascomycota</taxon>
        <taxon>Taphrinomycotina</taxon>
        <taxon>Schizosaccharomycetes</taxon>
        <taxon>Schizosaccharomycetales</taxon>
        <taxon>Schizosaccharomycetaceae</taxon>
        <taxon>Schizosaccharomyces</taxon>
    </lineage>
</organism>
<feature type="chain" id="PRO_0000122301" description="Probable guanine deaminase">
    <location>
        <begin position="1"/>
        <end position="527"/>
    </location>
</feature>
<feature type="binding site" evidence="2">
    <location>
        <position position="79"/>
    </location>
    <ligand>
        <name>Zn(2+)</name>
        <dbReference type="ChEBI" id="CHEBI:29105"/>
    </ligand>
</feature>
<feature type="binding site" evidence="2">
    <location>
        <begin position="81"/>
        <end position="84"/>
    </location>
    <ligand>
        <name>substrate</name>
    </ligand>
</feature>
<feature type="binding site" evidence="2">
    <location>
        <position position="81"/>
    </location>
    <ligand>
        <name>Zn(2+)</name>
        <dbReference type="ChEBI" id="CHEBI:29105"/>
    </ligand>
</feature>
<feature type="binding site" evidence="2">
    <location>
        <begin position="212"/>
        <end position="213"/>
    </location>
    <ligand>
        <name>substrate</name>
    </ligand>
</feature>
<feature type="binding site" evidence="2">
    <location>
        <begin position="239"/>
        <end position="242"/>
    </location>
    <ligand>
        <name>substrate</name>
    </ligand>
</feature>
<feature type="binding site" evidence="2">
    <location>
        <position position="239"/>
    </location>
    <ligand>
        <name>Zn(2+)</name>
        <dbReference type="ChEBI" id="CHEBI:29105"/>
    </ligand>
</feature>
<feature type="binding site" evidence="2">
    <location>
        <position position="329"/>
    </location>
    <ligand>
        <name>substrate</name>
    </ligand>
</feature>
<feature type="binding site" evidence="2">
    <location>
        <position position="329"/>
    </location>
    <ligand>
        <name>Zn(2+)</name>
        <dbReference type="ChEBI" id="CHEBI:29105"/>
    </ligand>
</feature>